<proteinExistence type="inferred from homology"/>
<feature type="chain" id="PRO_0000097293" description="Glucose-1-phosphate cytidylyltransferase">
    <location>
        <begin position="1"/>
        <end position="257"/>
    </location>
</feature>
<feature type="binding site" evidence="1">
    <location>
        <begin position="6"/>
        <end position="10"/>
    </location>
    <ligand>
        <name>substrate</name>
    </ligand>
</feature>
<feature type="binding site" evidence="1">
    <location>
        <begin position="11"/>
        <end position="13"/>
    </location>
    <ligand>
        <name>substrate</name>
    </ligand>
</feature>
<feature type="binding site" evidence="1">
    <location>
        <position position="23"/>
    </location>
    <ligand>
        <name>substrate</name>
    </ligand>
</feature>
<feature type="binding site" evidence="1">
    <location>
        <position position="104"/>
    </location>
    <ligand>
        <name>substrate</name>
    </ligand>
</feature>
<feature type="binding site" evidence="1">
    <location>
        <position position="109"/>
    </location>
    <ligand>
        <name>substrate</name>
    </ligand>
</feature>
<feature type="binding site" evidence="1">
    <location>
        <position position="128"/>
    </location>
    <ligand>
        <name>substrate</name>
    </ligand>
</feature>
<feature type="binding site" evidence="1">
    <location>
        <position position="129"/>
    </location>
    <ligand>
        <name>Mg(2+)</name>
        <dbReference type="ChEBI" id="CHEBI:18420"/>
    </ligand>
</feature>
<feature type="binding site" evidence="1">
    <location>
        <position position="234"/>
    </location>
    <ligand>
        <name>Mg(2+)</name>
        <dbReference type="ChEBI" id="CHEBI:18420"/>
    </ligand>
</feature>
<protein>
    <recommendedName>
        <fullName>Glucose-1-phosphate cytidylyltransferase</fullName>
        <ecNumber>2.7.7.33</ecNumber>
    </recommendedName>
    <alternativeName>
        <fullName>CDP-glucose pyrophosphorylase</fullName>
    </alternativeName>
</protein>
<reference key="1">
    <citation type="journal article" date="1991" name="Mol. Microbiol.">
        <title>Structure and sequence of the rfb (O antigen) gene cluster of Salmonella serovar typhimurium (strain LT2).</title>
        <authorList>
            <person name="Jiang X.-M."/>
            <person name="Neal B."/>
            <person name="Santiago F."/>
            <person name="Lee S.J."/>
            <person name="Romana L.K."/>
            <person name="Reeves P.R."/>
        </authorList>
    </citation>
    <scope>NUCLEOTIDE SEQUENCE [GENOMIC DNA]</scope>
    <source>
        <strain>LT2</strain>
    </source>
</reference>
<reference key="2">
    <citation type="journal article" date="2001" name="Nature">
        <title>Complete genome sequence of Salmonella enterica serovar Typhimurium LT2.</title>
        <authorList>
            <person name="McClelland M."/>
            <person name="Sanderson K.E."/>
            <person name="Spieth J."/>
            <person name="Clifton S.W."/>
            <person name="Latreille P."/>
            <person name="Courtney L."/>
            <person name="Porwollik S."/>
            <person name="Ali J."/>
            <person name="Dante M."/>
            <person name="Du F."/>
            <person name="Hou S."/>
            <person name="Layman D."/>
            <person name="Leonard S."/>
            <person name="Nguyen C."/>
            <person name="Scott K."/>
            <person name="Holmes A."/>
            <person name="Grewal N."/>
            <person name="Mulvaney E."/>
            <person name="Ryan E."/>
            <person name="Sun H."/>
            <person name="Florea L."/>
            <person name="Miller W."/>
            <person name="Stoneking T."/>
            <person name="Nhan M."/>
            <person name="Waterston R."/>
            <person name="Wilson R.K."/>
        </authorList>
    </citation>
    <scope>NUCLEOTIDE SEQUENCE [LARGE SCALE GENOMIC DNA]</scope>
    <source>
        <strain>LT2 / SGSC1412 / ATCC 700720</strain>
    </source>
</reference>
<organism>
    <name type="scientific">Salmonella typhimurium (strain LT2 / SGSC1412 / ATCC 700720)</name>
    <dbReference type="NCBI Taxonomy" id="99287"/>
    <lineage>
        <taxon>Bacteria</taxon>
        <taxon>Pseudomonadati</taxon>
        <taxon>Pseudomonadota</taxon>
        <taxon>Gammaproteobacteria</taxon>
        <taxon>Enterobacterales</taxon>
        <taxon>Enterobacteriaceae</taxon>
        <taxon>Salmonella</taxon>
    </lineage>
</organism>
<evidence type="ECO:0000250" key="1"/>
<evidence type="ECO:0000305" key="2"/>
<sequence length="257" mass="29035">MKAVILAGGLGTRLSEETIVKPKPMVEIGGKPILWHIMKMYSVHGIKDFIICCGYKGYVIKEYFANYFLHMSDVTFHMAENRMEVHHKRVEPWNVTLVDTGDSSMTGGRLKRVAEYVKDDEAFLFTYGDGVADLDIKATIDFHKAHGKKATLTATFPPGRFGALDIRAGQVRSFQEKPKGDGAMINGGFFVLNPSVIDLIDNDATTWEQEPLMTLAQQGELMAFEHPGFWQPMDTLRDKVYLEGLWEKGKAPWKTWE</sequence>
<comment type="function">
    <text evidence="1">Involved in the biosynthesis of the tyvelose, a 3,6-dideoxyhexose found in the O-antigen of the surface lipopolysaccharides. It catalyzes the transfer of a CMP moiety from CTP to glucose 1-phosphate (By similarity).</text>
</comment>
<comment type="catalytic activity">
    <reaction>
        <text>alpha-D-glucose 1-phosphate + CTP + H(+) = CDP-D-glucose + diphosphate</text>
        <dbReference type="Rhea" id="RHEA:18213"/>
        <dbReference type="ChEBI" id="CHEBI:15378"/>
        <dbReference type="ChEBI" id="CHEBI:33019"/>
        <dbReference type="ChEBI" id="CHEBI:37563"/>
        <dbReference type="ChEBI" id="CHEBI:58601"/>
        <dbReference type="ChEBI" id="CHEBI:58660"/>
        <dbReference type="EC" id="2.7.7.33"/>
    </reaction>
</comment>
<comment type="cofactor">
    <cofactor evidence="1">
        <name>Mg(2+)</name>
        <dbReference type="ChEBI" id="CHEBI:18420"/>
    </cofactor>
    <text evidence="1">Binds 1 Mg(2+) ion per subunit.</text>
</comment>
<comment type="pathway">
    <text>Nucleotide-sugar biosynthesis; CDP-3,6-dideoxy-D-mannose biosynthesis; CDP-3,6-dideoxy-D-mannose from CTP and alpha-D-glucose 1-phosphate: step 1/5.</text>
</comment>
<comment type="pathway">
    <text>Bacterial outer membrane biogenesis; LPS O-antigen biosynthesis.</text>
</comment>
<comment type="subunit">
    <text evidence="1">Homohexamer.</text>
</comment>
<comment type="miscellaneous">
    <text evidence="1">Catalysis proceeds via a sequential rather than a ping-pong bi-bi reaction mechanism.</text>
</comment>
<comment type="similarity">
    <text evidence="2">Belongs to the glucose-1-phosphate cytidylyltransferase family.</text>
</comment>
<accession>P26396</accession>
<name>RFBF_SALTY</name>
<dbReference type="EC" id="2.7.7.33"/>
<dbReference type="EMBL" id="X56793">
    <property type="protein sequence ID" value="CAA40120.1"/>
    <property type="molecule type" value="Genomic_DNA"/>
</dbReference>
<dbReference type="EMBL" id="AE006468">
    <property type="protein sequence ID" value="AAL20996.1"/>
    <property type="molecule type" value="Genomic_DNA"/>
</dbReference>
<dbReference type="PIR" id="S15304">
    <property type="entry name" value="S15304"/>
</dbReference>
<dbReference type="RefSeq" id="NP_461037.1">
    <property type="nucleotide sequence ID" value="NC_003197.2"/>
</dbReference>
<dbReference type="RefSeq" id="WP_000648784.1">
    <property type="nucleotide sequence ID" value="NC_003197.2"/>
</dbReference>
<dbReference type="SMR" id="P26396"/>
<dbReference type="STRING" id="99287.STM2092"/>
<dbReference type="DrugBank" id="DB02431">
    <property type="generic name" value="Cytidine-5'-Triphosphate"/>
</dbReference>
<dbReference type="PaxDb" id="99287-STM2092"/>
<dbReference type="GeneID" id="1253613"/>
<dbReference type="KEGG" id="stm:STM2092"/>
<dbReference type="PATRIC" id="fig|99287.12.peg.2214"/>
<dbReference type="HOGENOM" id="CLU_029499_10_0_6"/>
<dbReference type="OMA" id="YWRAIDT"/>
<dbReference type="PhylomeDB" id="P26396"/>
<dbReference type="BioCyc" id="SENT99287:STM2092-MONOMER"/>
<dbReference type="UniPathway" id="UPA00055">
    <property type="reaction ID" value="UER00511"/>
</dbReference>
<dbReference type="UniPathway" id="UPA00281"/>
<dbReference type="Proteomes" id="UP000001014">
    <property type="component" value="Chromosome"/>
</dbReference>
<dbReference type="GO" id="GO:0047343">
    <property type="term" value="F:glucose-1-phosphate cytidylyltransferase activity"/>
    <property type="evidence" value="ECO:0007669"/>
    <property type="project" value="UniProtKB-EC"/>
</dbReference>
<dbReference type="GO" id="GO:0046872">
    <property type="term" value="F:metal ion binding"/>
    <property type="evidence" value="ECO:0007669"/>
    <property type="project" value="UniProtKB-KW"/>
</dbReference>
<dbReference type="GO" id="GO:0000166">
    <property type="term" value="F:nucleotide binding"/>
    <property type="evidence" value="ECO:0007669"/>
    <property type="project" value="UniProtKB-KW"/>
</dbReference>
<dbReference type="GO" id="GO:0009243">
    <property type="term" value="P:O antigen biosynthetic process"/>
    <property type="evidence" value="ECO:0007669"/>
    <property type="project" value="UniProtKB-UniPathway"/>
</dbReference>
<dbReference type="CDD" id="cd02524">
    <property type="entry name" value="G1P_cytidylyltransferase"/>
    <property type="match status" value="1"/>
</dbReference>
<dbReference type="Gene3D" id="3.90.550.10">
    <property type="entry name" value="Spore Coat Polysaccharide Biosynthesis Protein SpsA, Chain A"/>
    <property type="match status" value="1"/>
</dbReference>
<dbReference type="InterPro" id="IPR046981">
    <property type="entry name" value="G1P_cyt_trans"/>
</dbReference>
<dbReference type="InterPro" id="IPR013446">
    <property type="entry name" value="G1P_cyt_trans-like"/>
</dbReference>
<dbReference type="InterPro" id="IPR005835">
    <property type="entry name" value="NTP_transferase_dom"/>
</dbReference>
<dbReference type="InterPro" id="IPR029044">
    <property type="entry name" value="Nucleotide-diphossugar_trans"/>
</dbReference>
<dbReference type="NCBIfam" id="TIGR02623">
    <property type="entry name" value="G1P_cyt_trans"/>
    <property type="match status" value="1"/>
</dbReference>
<dbReference type="PANTHER" id="PTHR47183:SF1">
    <property type="entry name" value="GLUCOSE-1-PHOSPHATE CYTIDYLYLTRANSFERASE"/>
    <property type="match status" value="1"/>
</dbReference>
<dbReference type="PANTHER" id="PTHR47183">
    <property type="entry name" value="GLUCOSE-1-PHOSPHATE CYTIDYLYLTRANSFERASE-RELATED"/>
    <property type="match status" value="1"/>
</dbReference>
<dbReference type="Pfam" id="PF00483">
    <property type="entry name" value="NTP_transferase"/>
    <property type="match status" value="1"/>
</dbReference>
<dbReference type="SUPFAM" id="SSF53448">
    <property type="entry name" value="Nucleotide-diphospho-sugar transferases"/>
    <property type="match status" value="1"/>
</dbReference>
<keyword id="KW-0448">Lipopolysaccharide biosynthesis</keyword>
<keyword id="KW-0460">Magnesium</keyword>
<keyword id="KW-0479">Metal-binding</keyword>
<keyword id="KW-0547">Nucleotide-binding</keyword>
<keyword id="KW-0548">Nucleotidyltransferase</keyword>
<keyword id="KW-1185">Reference proteome</keyword>
<keyword id="KW-0808">Transferase</keyword>
<gene>
    <name type="primary">rfbF</name>
    <name type="ordered locus">STM2092</name>
</gene>